<accession>A2SLF4</accession>
<sequence length="274" mass="30095">MAVVKVKPTSPGRRAVVKVVHSHLHKGKPEASLLEPQIQNAGRNNNGHITIRHKGGGHKHHYRVVDFKRNKDGIPAKVERIEYDPNRTAHIALVCYADGERRYIIAPRGLEVGATILSGSEAPIKAGNTLPIRNIPVGSTMHCVELLAGKGAQIARSAGTSVTLLARESTYAQVRLRSGEVRRIHIECRATIGEVSNEEHNLRQYGKAGAIRWKGVRPTVRGVAMNPVDHPHGGGEGRTGEGQVPVSPWNTMTKGYRTRSNKRTQTFIVSRRKK</sequence>
<keyword id="KW-1185">Reference proteome</keyword>
<keyword id="KW-0687">Ribonucleoprotein</keyword>
<keyword id="KW-0689">Ribosomal protein</keyword>
<keyword id="KW-0694">RNA-binding</keyword>
<keyword id="KW-0699">rRNA-binding</keyword>
<protein>
    <recommendedName>
        <fullName evidence="1">Large ribosomal subunit protein uL2</fullName>
    </recommendedName>
    <alternativeName>
        <fullName evidence="3">50S ribosomal protein L2</fullName>
    </alternativeName>
</protein>
<name>RL2_METPP</name>
<comment type="function">
    <text evidence="1">One of the primary rRNA binding proteins. Required for association of the 30S and 50S subunits to form the 70S ribosome, for tRNA binding and peptide bond formation. It has been suggested to have peptidyltransferase activity; this is somewhat controversial. Makes several contacts with the 16S rRNA in the 70S ribosome.</text>
</comment>
<comment type="subunit">
    <text evidence="1">Part of the 50S ribosomal subunit. Forms a bridge to the 30S subunit in the 70S ribosome.</text>
</comment>
<comment type="similarity">
    <text evidence="1">Belongs to the universal ribosomal protein uL2 family.</text>
</comment>
<dbReference type="EMBL" id="CP000555">
    <property type="protein sequence ID" value="ABM96393.1"/>
    <property type="molecule type" value="Genomic_DNA"/>
</dbReference>
<dbReference type="RefSeq" id="WP_011831014.1">
    <property type="nucleotide sequence ID" value="NC_008825.1"/>
</dbReference>
<dbReference type="SMR" id="A2SLF4"/>
<dbReference type="STRING" id="420662.Mpe_A3440"/>
<dbReference type="KEGG" id="mpt:Mpe_A3440"/>
<dbReference type="eggNOG" id="COG0090">
    <property type="taxonomic scope" value="Bacteria"/>
</dbReference>
<dbReference type="HOGENOM" id="CLU_036235_2_1_4"/>
<dbReference type="Proteomes" id="UP000000366">
    <property type="component" value="Chromosome"/>
</dbReference>
<dbReference type="GO" id="GO:0015934">
    <property type="term" value="C:large ribosomal subunit"/>
    <property type="evidence" value="ECO:0007669"/>
    <property type="project" value="InterPro"/>
</dbReference>
<dbReference type="GO" id="GO:0019843">
    <property type="term" value="F:rRNA binding"/>
    <property type="evidence" value="ECO:0007669"/>
    <property type="project" value="UniProtKB-UniRule"/>
</dbReference>
<dbReference type="GO" id="GO:0003735">
    <property type="term" value="F:structural constituent of ribosome"/>
    <property type="evidence" value="ECO:0007669"/>
    <property type="project" value="InterPro"/>
</dbReference>
<dbReference type="GO" id="GO:0016740">
    <property type="term" value="F:transferase activity"/>
    <property type="evidence" value="ECO:0007669"/>
    <property type="project" value="InterPro"/>
</dbReference>
<dbReference type="GO" id="GO:0002181">
    <property type="term" value="P:cytoplasmic translation"/>
    <property type="evidence" value="ECO:0007669"/>
    <property type="project" value="TreeGrafter"/>
</dbReference>
<dbReference type="FunFam" id="2.30.30.30:FF:000001">
    <property type="entry name" value="50S ribosomal protein L2"/>
    <property type="match status" value="1"/>
</dbReference>
<dbReference type="FunFam" id="2.40.50.140:FF:000003">
    <property type="entry name" value="50S ribosomal protein L2"/>
    <property type="match status" value="1"/>
</dbReference>
<dbReference type="FunFam" id="4.10.950.10:FF:000001">
    <property type="entry name" value="50S ribosomal protein L2"/>
    <property type="match status" value="1"/>
</dbReference>
<dbReference type="Gene3D" id="2.30.30.30">
    <property type="match status" value="1"/>
</dbReference>
<dbReference type="Gene3D" id="2.40.50.140">
    <property type="entry name" value="Nucleic acid-binding proteins"/>
    <property type="match status" value="1"/>
</dbReference>
<dbReference type="Gene3D" id="4.10.950.10">
    <property type="entry name" value="Ribosomal protein L2, domain 3"/>
    <property type="match status" value="1"/>
</dbReference>
<dbReference type="HAMAP" id="MF_01320_B">
    <property type="entry name" value="Ribosomal_uL2_B"/>
    <property type="match status" value="1"/>
</dbReference>
<dbReference type="InterPro" id="IPR012340">
    <property type="entry name" value="NA-bd_OB-fold"/>
</dbReference>
<dbReference type="InterPro" id="IPR014722">
    <property type="entry name" value="Rib_uL2_dom2"/>
</dbReference>
<dbReference type="InterPro" id="IPR002171">
    <property type="entry name" value="Ribosomal_uL2"/>
</dbReference>
<dbReference type="InterPro" id="IPR005880">
    <property type="entry name" value="Ribosomal_uL2_bac/org-type"/>
</dbReference>
<dbReference type="InterPro" id="IPR022669">
    <property type="entry name" value="Ribosomal_uL2_C"/>
</dbReference>
<dbReference type="InterPro" id="IPR022671">
    <property type="entry name" value="Ribosomal_uL2_CS"/>
</dbReference>
<dbReference type="InterPro" id="IPR014726">
    <property type="entry name" value="Ribosomal_uL2_dom3"/>
</dbReference>
<dbReference type="InterPro" id="IPR022666">
    <property type="entry name" value="Ribosomal_uL2_RNA-bd_dom"/>
</dbReference>
<dbReference type="InterPro" id="IPR008991">
    <property type="entry name" value="Translation_prot_SH3-like_sf"/>
</dbReference>
<dbReference type="NCBIfam" id="TIGR01171">
    <property type="entry name" value="rplB_bact"/>
    <property type="match status" value="1"/>
</dbReference>
<dbReference type="PANTHER" id="PTHR13691:SF5">
    <property type="entry name" value="LARGE RIBOSOMAL SUBUNIT PROTEIN UL2M"/>
    <property type="match status" value="1"/>
</dbReference>
<dbReference type="PANTHER" id="PTHR13691">
    <property type="entry name" value="RIBOSOMAL PROTEIN L2"/>
    <property type="match status" value="1"/>
</dbReference>
<dbReference type="Pfam" id="PF00181">
    <property type="entry name" value="Ribosomal_L2"/>
    <property type="match status" value="1"/>
</dbReference>
<dbReference type="Pfam" id="PF03947">
    <property type="entry name" value="Ribosomal_L2_C"/>
    <property type="match status" value="1"/>
</dbReference>
<dbReference type="PIRSF" id="PIRSF002158">
    <property type="entry name" value="Ribosomal_L2"/>
    <property type="match status" value="1"/>
</dbReference>
<dbReference type="SMART" id="SM01383">
    <property type="entry name" value="Ribosomal_L2"/>
    <property type="match status" value="1"/>
</dbReference>
<dbReference type="SMART" id="SM01382">
    <property type="entry name" value="Ribosomal_L2_C"/>
    <property type="match status" value="1"/>
</dbReference>
<dbReference type="SUPFAM" id="SSF50249">
    <property type="entry name" value="Nucleic acid-binding proteins"/>
    <property type="match status" value="1"/>
</dbReference>
<dbReference type="SUPFAM" id="SSF50104">
    <property type="entry name" value="Translation proteins SH3-like domain"/>
    <property type="match status" value="1"/>
</dbReference>
<dbReference type="PROSITE" id="PS00467">
    <property type="entry name" value="RIBOSOMAL_L2"/>
    <property type="match status" value="1"/>
</dbReference>
<evidence type="ECO:0000255" key="1">
    <source>
        <dbReference type="HAMAP-Rule" id="MF_01320"/>
    </source>
</evidence>
<evidence type="ECO:0000256" key="2">
    <source>
        <dbReference type="SAM" id="MobiDB-lite"/>
    </source>
</evidence>
<evidence type="ECO:0000305" key="3"/>
<proteinExistence type="inferred from homology"/>
<organism>
    <name type="scientific">Methylibium petroleiphilum (strain ATCC BAA-1232 / LMG 22953 / PM1)</name>
    <dbReference type="NCBI Taxonomy" id="420662"/>
    <lineage>
        <taxon>Bacteria</taxon>
        <taxon>Pseudomonadati</taxon>
        <taxon>Pseudomonadota</taxon>
        <taxon>Betaproteobacteria</taxon>
        <taxon>Burkholderiales</taxon>
        <taxon>Sphaerotilaceae</taxon>
        <taxon>Methylibium</taxon>
    </lineage>
</organism>
<reference key="1">
    <citation type="journal article" date="2007" name="J. Bacteriol.">
        <title>Whole-genome analysis of the methyl tert-butyl ether-degrading beta-proteobacterium Methylibium petroleiphilum PM1.</title>
        <authorList>
            <person name="Kane S.R."/>
            <person name="Chakicherla A.Y."/>
            <person name="Chain P.S.G."/>
            <person name="Schmidt R."/>
            <person name="Shin M.W."/>
            <person name="Legler T.C."/>
            <person name="Scow K.M."/>
            <person name="Larimer F.W."/>
            <person name="Lucas S.M."/>
            <person name="Richardson P.M."/>
            <person name="Hristova K.R."/>
        </authorList>
    </citation>
    <scope>NUCLEOTIDE SEQUENCE [LARGE SCALE GENOMIC DNA]</scope>
    <source>
        <strain>ATCC BAA-1232 / LMG 22953 / PM1</strain>
    </source>
</reference>
<gene>
    <name evidence="1" type="primary">rplB</name>
    <name type="ordered locus">Mpe_A3440</name>
</gene>
<feature type="chain" id="PRO_0000309954" description="Large ribosomal subunit protein uL2">
    <location>
        <begin position="1"/>
        <end position="274"/>
    </location>
</feature>
<feature type="region of interest" description="Disordered" evidence="2">
    <location>
        <begin position="224"/>
        <end position="274"/>
    </location>
</feature>
<feature type="compositionally biased region" description="Basic and acidic residues" evidence="2">
    <location>
        <begin position="229"/>
        <end position="239"/>
    </location>
</feature>